<organism>
    <name type="scientific">Halalkalibacterium halodurans (strain ATCC BAA-125 / DSM 18197 / FERM 7344 / JCM 9153 / C-125)</name>
    <name type="common">Bacillus halodurans</name>
    <dbReference type="NCBI Taxonomy" id="272558"/>
    <lineage>
        <taxon>Bacteria</taxon>
        <taxon>Bacillati</taxon>
        <taxon>Bacillota</taxon>
        <taxon>Bacilli</taxon>
        <taxon>Bacillales</taxon>
        <taxon>Bacillaceae</taxon>
        <taxon>Halalkalibacterium (ex Joshi et al. 2022)</taxon>
    </lineage>
</organism>
<proteinExistence type="evidence at protein level"/>
<keyword id="KW-0002">3D-structure</keyword>
<keyword id="KW-0963">Cytoplasm</keyword>
<keyword id="KW-1185">Reference proteome</keyword>
<keyword id="KW-0678">Repressor</keyword>
<keyword id="KW-0810">Translation regulation</keyword>
<reference key="1">
    <citation type="journal article" date="2000" name="Nucleic Acids Res.">
        <title>Complete genome sequence of the alkaliphilic bacterium Bacillus halodurans and genomic sequence comparison with Bacillus subtilis.</title>
        <authorList>
            <person name="Takami H."/>
            <person name="Nakasone K."/>
            <person name="Takaki Y."/>
            <person name="Maeno G."/>
            <person name="Sasaki R."/>
            <person name="Masui N."/>
            <person name="Fuji F."/>
            <person name="Hirama C."/>
            <person name="Nakamura Y."/>
            <person name="Ogasawara N."/>
            <person name="Kuhara S."/>
            <person name="Horikoshi K."/>
        </authorList>
    </citation>
    <scope>NUCLEOTIDE SEQUENCE [LARGE SCALE GENOMIC DNA]</scope>
    <source>
        <strain>ATCC BAA-125 / DSM 18197 / FERM 7344 / JCM 9153 / C-125</strain>
    </source>
</reference>
<reference key="2">
    <citation type="submission" date="2006-12" db="PDB data bank">
        <title>Crystal structure of Q9KD89 from Bacillus halodurans. Northeast structural genomics target BhR21.</title>
        <authorList>
            <person name="Benach J."/>
            <person name="Su M."/>
            <person name="Seetharaman J."/>
            <person name="Ho C.H."/>
            <person name="Janjua H."/>
            <person name="Cunningham K."/>
            <person name="Ma L.-C."/>
            <person name="Xiao R."/>
            <person name="Liu J."/>
            <person name="Baran M.C."/>
            <person name="Acton T.B."/>
            <person name="Rost B."/>
            <person name="Montelione G.T."/>
            <person name="Hunt J.F."/>
            <person name="Tong L."/>
        </authorList>
    </citation>
    <scope>X-RAY CRYSTALLOGRAPHY (2.70 ANGSTROMS)</scope>
</reference>
<protein>
    <recommendedName>
        <fullName evidence="1">Ribosomal silencing factor RsfS</fullName>
    </recommendedName>
</protein>
<sequence length="117" mass="13201">MSNQELLQLAVNAVDDKKAEQVVALNMKGISLIADFFLICHGNSEKQVQAIAHELKKVAQEQGIEIKRLEGYEQARWVLIDLGDVVVHVFHKDERAYYNLEKLWGDAPTVELEGVIS</sequence>
<name>IOJAP_HALH5</name>
<feature type="chain" id="PRO_0000419623" description="Ribosomal silencing factor RsfS">
    <location>
        <begin position="1"/>
        <end position="117"/>
    </location>
</feature>
<feature type="helix" evidence="2">
    <location>
        <begin position="4"/>
        <end position="16"/>
    </location>
</feature>
<feature type="strand" evidence="2">
    <location>
        <begin position="20"/>
        <end position="26"/>
    </location>
</feature>
<feature type="strand" evidence="2">
    <location>
        <begin position="36"/>
        <end position="44"/>
    </location>
</feature>
<feature type="helix" evidence="2">
    <location>
        <begin position="45"/>
        <end position="61"/>
    </location>
</feature>
<feature type="strand" evidence="2">
    <location>
        <begin position="68"/>
        <end position="71"/>
    </location>
</feature>
<feature type="turn" evidence="2">
    <location>
        <begin position="72"/>
        <end position="75"/>
    </location>
</feature>
<feature type="strand" evidence="2">
    <location>
        <begin position="76"/>
        <end position="81"/>
    </location>
</feature>
<feature type="strand" evidence="2">
    <location>
        <begin position="83"/>
        <end position="91"/>
    </location>
</feature>
<feature type="helix" evidence="2">
    <location>
        <begin position="95"/>
        <end position="97"/>
    </location>
</feature>
<feature type="turn" evidence="2">
    <location>
        <begin position="100"/>
        <end position="102"/>
    </location>
</feature>
<accession>Q9KD89</accession>
<gene>
    <name evidence="1" type="primary">rsfS</name>
    <name type="ordered locus">BH1328</name>
</gene>
<dbReference type="EMBL" id="BA000004">
    <property type="protein sequence ID" value="BAB05047.1"/>
    <property type="molecule type" value="Genomic_DNA"/>
</dbReference>
<dbReference type="PIR" id="H83815">
    <property type="entry name" value="H83815"/>
</dbReference>
<dbReference type="RefSeq" id="WP_010897495.1">
    <property type="nucleotide sequence ID" value="NC_002570.2"/>
</dbReference>
<dbReference type="PDB" id="2O5A">
    <property type="method" value="X-ray"/>
    <property type="resolution" value="2.70 A"/>
    <property type="chains" value="A/B=1-117"/>
</dbReference>
<dbReference type="PDBsum" id="2O5A"/>
<dbReference type="SMR" id="Q9KD89"/>
<dbReference type="STRING" id="272558.gene:10727222"/>
<dbReference type="GeneID" id="87596950"/>
<dbReference type="KEGG" id="bha:BH1328"/>
<dbReference type="eggNOG" id="COG0799">
    <property type="taxonomic scope" value="Bacteria"/>
</dbReference>
<dbReference type="HOGENOM" id="CLU_092688_2_2_9"/>
<dbReference type="OrthoDB" id="9793681at2"/>
<dbReference type="EvolutionaryTrace" id="Q9KD89"/>
<dbReference type="Proteomes" id="UP000001258">
    <property type="component" value="Chromosome"/>
</dbReference>
<dbReference type="GO" id="GO:0005737">
    <property type="term" value="C:cytoplasm"/>
    <property type="evidence" value="ECO:0007669"/>
    <property type="project" value="UniProtKB-SubCell"/>
</dbReference>
<dbReference type="GO" id="GO:0043023">
    <property type="term" value="F:ribosomal large subunit binding"/>
    <property type="evidence" value="ECO:0007669"/>
    <property type="project" value="TreeGrafter"/>
</dbReference>
<dbReference type="GO" id="GO:0042256">
    <property type="term" value="P:cytosolic ribosome assembly"/>
    <property type="evidence" value="ECO:0007669"/>
    <property type="project" value="UniProtKB-UniRule"/>
</dbReference>
<dbReference type="GO" id="GO:0090071">
    <property type="term" value="P:negative regulation of ribosome biogenesis"/>
    <property type="evidence" value="ECO:0007669"/>
    <property type="project" value="UniProtKB-UniRule"/>
</dbReference>
<dbReference type="GO" id="GO:0017148">
    <property type="term" value="P:negative regulation of translation"/>
    <property type="evidence" value="ECO:0007669"/>
    <property type="project" value="UniProtKB-UniRule"/>
</dbReference>
<dbReference type="FunFam" id="3.30.460.10:FF:000015">
    <property type="entry name" value="Ribosomal silencing factor RsfS"/>
    <property type="match status" value="1"/>
</dbReference>
<dbReference type="Gene3D" id="3.30.460.10">
    <property type="entry name" value="Beta Polymerase, domain 2"/>
    <property type="match status" value="1"/>
</dbReference>
<dbReference type="HAMAP" id="MF_01477">
    <property type="entry name" value="Iojap_RsfS"/>
    <property type="match status" value="1"/>
</dbReference>
<dbReference type="InterPro" id="IPR004394">
    <property type="entry name" value="Iojap/RsfS/C7orf30"/>
</dbReference>
<dbReference type="InterPro" id="IPR043519">
    <property type="entry name" value="NT_sf"/>
</dbReference>
<dbReference type="NCBIfam" id="TIGR00090">
    <property type="entry name" value="rsfS_iojap_ybeB"/>
    <property type="match status" value="1"/>
</dbReference>
<dbReference type="PANTHER" id="PTHR21043">
    <property type="entry name" value="IOJAP SUPERFAMILY ORTHOLOG"/>
    <property type="match status" value="1"/>
</dbReference>
<dbReference type="PANTHER" id="PTHR21043:SF0">
    <property type="entry name" value="MITOCHONDRIAL ASSEMBLY OF RIBOSOMAL LARGE SUBUNIT PROTEIN 1"/>
    <property type="match status" value="1"/>
</dbReference>
<dbReference type="Pfam" id="PF02410">
    <property type="entry name" value="RsfS"/>
    <property type="match status" value="1"/>
</dbReference>
<dbReference type="SUPFAM" id="SSF81301">
    <property type="entry name" value="Nucleotidyltransferase"/>
    <property type="match status" value="1"/>
</dbReference>
<comment type="function">
    <text evidence="1">Functions as a ribosomal silencing factor. Interacts with ribosomal protein uL14 (rplN), blocking formation of intersubunit bridge B8. Prevents association of the 30S and 50S ribosomal subunits and the formation of functional ribosomes, thus repressing translation.</text>
</comment>
<comment type="subunit">
    <text evidence="1">Interacts with ribosomal protein uL14 (rplN).</text>
</comment>
<comment type="subcellular location">
    <subcellularLocation>
        <location evidence="1">Cytoplasm</location>
    </subcellularLocation>
</comment>
<comment type="similarity">
    <text evidence="1">Belongs to the Iojap/RsfS family.</text>
</comment>
<evidence type="ECO:0000255" key="1">
    <source>
        <dbReference type="HAMAP-Rule" id="MF_01477"/>
    </source>
</evidence>
<evidence type="ECO:0007829" key="2">
    <source>
        <dbReference type="PDB" id="2O5A"/>
    </source>
</evidence>